<dbReference type="EMBL" id="U67066">
    <property type="protein sequence ID" value="AAB17271.1"/>
    <property type="molecule type" value="mRNA"/>
</dbReference>
<dbReference type="EMBL" id="AE014134">
    <property type="protein sequence ID" value="AAF51512.1"/>
    <property type="molecule type" value="Genomic_DNA"/>
</dbReference>
<dbReference type="EMBL" id="AY058537">
    <property type="protein sequence ID" value="AAL13766.1"/>
    <property type="molecule type" value="mRNA"/>
</dbReference>
<dbReference type="PIR" id="JC6125">
    <property type="entry name" value="JC6125"/>
</dbReference>
<dbReference type="RefSeq" id="NP_001259814.1">
    <property type="nucleotide sequence ID" value="NM_001272885.1"/>
</dbReference>
<dbReference type="RefSeq" id="NP_477208.1">
    <property type="nucleotide sequence ID" value="NM_057860.4"/>
</dbReference>
<dbReference type="SMR" id="Q94535"/>
<dbReference type="BioGRID" id="59457">
    <property type="interactions" value="5"/>
</dbReference>
<dbReference type="ComplexPortal" id="CPX-2302">
    <property type="entry name" value="U2 small nuclear ribonucleoprotein auxiliary factor complex"/>
</dbReference>
<dbReference type="DIP" id="DIP-23299N"/>
<dbReference type="FunCoup" id="Q94535">
    <property type="interactions" value="2340"/>
</dbReference>
<dbReference type="IntAct" id="Q94535">
    <property type="interactions" value="17"/>
</dbReference>
<dbReference type="STRING" id="7227.FBpp0305600"/>
<dbReference type="iPTMnet" id="Q94535"/>
<dbReference type="PaxDb" id="7227-FBpp0305600"/>
<dbReference type="EnsemblMetazoa" id="FBtr0078133">
    <property type="protein sequence ID" value="FBpp0077792"/>
    <property type="gene ID" value="FBgn0017457"/>
</dbReference>
<dbReference type="EnsemblMetazoa" id="FBtr0333408">
    <property type="protein sequence ID" value="FBpp0305600"/>
    <property type="gene ID" value="FBgn0017457"/>
</dbReference>
<dbReference type="GeneID" id="33201"/>
<dbReference type="KEGG" id="dme:Dmel_CG3582"/>
<dbReference type="AGR" id="FB:FBgn0017457"/>
<dbReference type="CTD" id="33201"/>
<dbReference type="FlyBase" id="FBgn0017457">
    <property type="gene designation" value="U2af38"/>
</dbReference>
<dbReference type="VEuPathDB" id="VectorBase:FBgn0017457"/>
<dbReference type="eggNOG" id="KOG2202">
    <property type="taxonomic scope" value="Eukaryota"/>
</dbReference>
<dbReference type="GeneTree" id="ENSGT00950000183152"/>
<dbReference type="HOGENOM" id="CLU_059852_1_0_1"/>
<dbReference type="InParanoid" id="Q94535"/>
<dbReference type="OMA" id="MIDTRQA"/>
<dbReference type="OrthoDB" id="423462at2759"/>
<dbReference type="PhylomeDB" id="Q94535"/>
<dbReference type="Reactome" id="R-DME-159236">
    <property type="pathway name" value="Transport of Mature mRNA derived from an Intron-Containing Transcript"/>
</dbReference>
<dbReference type="Reactome" id="R-DME-72187">
    <property type="pathway name" value="mRNA 3'-end processing"/>
</dbReference>
<dbReference type="Reactome" id="R-DME-73856">
    <property type="pathway name" value="RNA Polymerase II Transcription Termination"/>
</dbReference>
<dbReference type="SignaLink" id="Q94535"/>
<dbReference type="BioGRID-ORCS" id="33201">
    <property type="hits" value="0 hits in 3 CRISPR screens"/>
</dbReference>
<dbReference type="ChiTaRS" id="U2af38">
    <property type="organism name" value="fly"/>
</dbReference>
<dbReference type="GenomeRNAi" id="33201"/>
<dbReference type="PRO" id="PR:Q94535"/>
<dbReference type="Proteomes" id="UP000000803">
    <property type="component" value="Chromosome 2L"/>
</dbReference>
<dbReference type="Bgee" id="FBgn0017457">
    <property type="expression patterns" value="Expressed in adult middle midgut class I enteroendocrine cell in adult midgut (Drosophila) and 107 other cell types or tissues"/>
</dbReference>
<dbReference type="ExpressionAtlas" id="Q94535">
    <property type="expression patterns" value="baseline and differential"/>
</dbReference>
<dbReference type="GO" id="GO:0005634">
    <property type="term" value="C:nucleus"/>
    <property type="evidence" value="ECO:0000305"/>
    <property type="project" value="FlyBase"/>
</dbReference>
<dbReference type="GO" id="GO:0071011">
    <property type="term" value="C:precatalytic spliceosome"/>
    <property type="evidence" value="ECO:0007005"/>
    <property type="project" value="FlyBase"/>
</dbReference>
<dbReference type="GO" id="GO:0005681">
    <property type="term" value="C:spliceosomal complex"/>
    <property type="evidence" value="ECO:0000318"/>
    <property type="project" value="GO_Central"/>
</dbReference>
<dbReference type="GO" id="GO:0089701">
    <property type="term" value="C:U2AF complex"/>
    <property type="evidence" value="ECO:0000314"/>
    <property type="project" value="FlyBase"/>
</dbReference>
<dbReference type="GO" id="GO:0003729">
    <property type="term" value="F:mRNA binding"/>
    <property type="evidence" value="ECO:0000250"/>
    <property type="project" value="FlyBase"/>
</dbReference>
<dbReference type="GO" id="GO:0008187">
    <property type="term" value="F:poly-pyrimidine tract binding"/>
    <property type="evidence" value="ECO:0000314"/>
    <property type="project" value="FlyBase"/>
</dbReference>
<dbReference type="GO" id="GO:0030628">
    <property type="term" value="F:pre-mRNA 3'-splice site binding"/>
    <property type="evidence" value="ECO:0000318"/>
    <property type="project" value="GO_Central"/>
</dbReference>
<dbReference type="GO" id="GO:0008270">
    <property type="term" value="F:zinc ion binding"/>
    <property type="evidence" value="ECO:0007669"/>
    <property type="project" value="UniProtKB-KW"/>
</dbReference>
<dbReference type="GO" id="GO:0000398">
    <property type="term" value="P:mRNA splicing, via spliceosome"/>
    <property type="evidence" value="ECO:0000315"/>
    <property type="project" value="FlyBase"/>
</dbReference>
<dbReference type="GO" id="GO:0000381">
    <property type="term" value="P:regulation of alternative mRNA splicing, via spliceosome"/>
    <property type="evidence" value="ECO:0000315"/>
    <property type="project" value="FlyBase"/>
</dbReference>
<dbReference type="GO" id="GO:0008380">
    <property type="term" value="P:RNA splicing"/>
    <property type="evidence" value="ECO:0000315"/>
    <property type="project" value="FlyBase"/>
</dbReference>
<dbReference type="CDD" id="cd12538">
    <property type="entry name" value="RRM_U2AF35"/>
    <property type="match status" value="1"/>
</dbReference>
<dbReference type="FunFam" id="3.30.70.330:FF:000055">
    <property type="entry name" value="Splicing factor U2AF 35 kDa subunit"/>
    <property type="match status" value="1"/>
</dbReference>
<dbReference type="Gene3D" id="3.30.70.330">
    <property type="match status" value="1"/>
</dbReference>
<dbReference type="InterPro" id="IPR012677">
    <property type="entry name" value="Nucleotide-bd_a/b_plait_sf"/>
</dbReference>
<dbReference type="InterPro" id="IPR035979">
    <property type="entry name" value="RBD_domain_sf"/>
</dbReference>
<dbReference type="InterPro" id="IPR000504">
    <property type="entry name" value="RRM_dom"/>
</dbReference>
<dbReference type="InterPro" id="IPR003954">
    <property type="entry name" value="RRM_dom_euk"/>
</dbReference>
<dbReference type="InterPro" id="IPR009145">
    <property type="entry name" value="U2AF_small"/>
</dbReference>
<dbReference type="InterPro" id="IPR000571">
    <property type="entry name" value="Znf_CCCH"/>
</dbReference>
<dbReference type="PANTHER" id="PTHR12620">
    <property type="entry name" value="U2 SNRNP AUXILIARY FACTOR, SMALL SUBUNIT"/>
    <property type="match status" value="1"/>
</dbReference>
<dbReference type="Pfam" id="PF00076">
    <property type="entry name" value="RRM_1"/>
    <property type="match status" value="1"/>
</dbReference>
<dbReference type="Pfam" id="PF00642">
    <property type="entry name" value="zf-CCCH"/>
    <property type="match status" value="2"/>
</dbReference>
<dbReference type="PRINTS" id="PR01848">
    <property type="entry name" value="U2AUXFACTOR"/>
</dbReference>
<dbReference type="SMART" id="SM00361">
    <property type="entry name" value="RRM_1"/>
    <property type="match status" value="1"/>
</dbReference>
<dbReference type="SMART" id="SM00356">
    <property type="entry name" value="ZnF_C3H1"/>
    <property type="match status" value="2"/>
</dbReference>
<dbReference type="SUPFAM" id="SSF54928">
    <property type="entry name" value="RNA-binding domain, RBD"/>
    <property type="match status" value="1"/>
</dbReference>
<dbReference type="PROSITE" id="PS50102">
    <property type="entry name" value="RRM"/>
    <property type="match status" value="1"/>
</dbReference>
<dbReference type="PROSITE" id="PS50103">
    <property type="entry name" value="ZF_C3H1"/>
    <property type="match status" value="2"/>
</dbReference>
<feature type="chain" id="PRO_0000081997" description="Splicing factor U2af 38 kDa subunit">
    <location>
        <begin position="1"/>
        <end position="264"/>
    </location>
</feature>
<feature type="domain" description="RRM" evidence="2">
    <location>
        <begin position="44"/>
        <end position="149"/>
    </location>
</feature>
<feature type="zinc finger region" description="C3H1-type 1" evidence="3">
    <location>
        <begin position="12"/>
        <end position="40"/>
    </location>
</feature>
<feature type="zinc finger region" description="C3H1-type 2" evidence="3">
    <location>
        <begin position="151"/>
        <end position="178"/>
    </location>
</feature>
<feature type="region of interest" description="Disordered" evidence="4">
    <location>
        <begin position="190"/>
        <end position="264"/>
    </location>
</feature>
<feature type="compositionally biased region" description="Basic residues" evidence="4">
    <location>
        <begin position="190"/>
        <end position="219"/>
    </location>
</feature>
<feature type="compositionally biased region" description="Basic and acidic residues" evidence="4">
    <location>
        <begin position="233"/>
        <end position="251"/>
    </location>
</feature>
<feature type="compositionally biased region" description="Gly residues" evidence="4">
    <location>
        <begin position="253"/>
        <end position="264"/>
    </location>
</feature>
<feature type="modified residue" description="Phosphoserine" evidence="5">
    <location>
        <position position="19"/>
    </location>
</feature>
<feature type="sequence conflict" description="In Ref. 1; AAB17271." evidence="6" ref="1">
    <original>H</original>
    <variation>D</variation>
    <location>
        <position position="66"/>
    </location>
</feature>
<name>U2AF1_DROME</name>
<comment type="function">
    <text evidence="1">Necessary for the splicing of pre-mRNA. Binds to the polypyrimidine tract of introns early during spliceosome assembly (By similarity).</text>
</comment>
<comment type="subunit">
    <text evidence="1">Associates with a 65 kDa protein.</text>
</comment>
<comment type="interaction">
    <interactant intactId="EBI-121011">
        <id>Q94535</id>
    </interactant>
    <interactant intactId="EBI-165226">
        <id>Q24562</id>
        <label>U2af50</label>
    </interactant>
    <organismsDiffer>false</organismsDiffer>
    <experiments>4</experiments>
</comment>
<comment type="subcellular location">
    <subcellularLocation>
        <location>Nucleus</location>
    </subcellularLocation>
</comment>
<comment type="similarity">
    <text evidence="6">Belongs to the splicing factor SR family.</text>
</comment>
<gene>
    <name type="primary">U2af38</name>
    <name type="ORF">CG3582</name>
</gene>
<sequence length="264" mass="29877">MAEYLASIFGTEKDKVNCSFYFKIGACRHGDRCSRIHNKPTFSQTVLLQNLYVNPQNSAKSADGSHLVANVSDEEMQEHYDNFFEDVFVECEDKYGEIEEMNVCDNLGDHLVGNVYIKFRNEADAEKAANDLNNRWFGGRPVYSELSPVTDFREACCRQYEMGECTRSGFCNFMHLKPISRELRRYLYSRRRRARSRSRSPGRRRGSRSRSRSPGRRGGGRGDGVGGGNYLNNERDNMRGNDRGNDRDRRKGGGGGGGGGGGRY</sequence>
<proteinExistence type="evidence at protein level"/>
<evidence type="ECO:0000250" key="1"/>
<evidence type="ECO:0000255" key="2">
    <source>
        <dbReference type="PROSITE-ProRule" id="PRU00176"/>
    </source>
</evidence>
<evidence type="ECO:0000255" key="3">
    <source>
        <dbReference type="PROSITE-ProRule" id="PRU00723"/>
    </source>
</evidence>
<evidence type="ECO:0000256" key="4">
    <source>
        <dbReference type="SAM" id="MobiDB-lite"/>
    </source>
</evidence>
<evidence type="ECO:0000269" key="5">
    <source>
    </source>
</evidence>
<evidence type="ECO:0000305" key="6"/>
<protein>
    <recommendedName>
        <fullName>Splicing factor U2af 38 kDa subunit</fullName>
    </recommendedName>
    <alternativeName>
        <fullName>U2 auxiliary factor 38 kDa subunit</fullName>
    </alternativeName>
    <alternativeName>
        <fullName>U2 snRNP auxiliary factor small subunit</fullName>
    </alternativeName>
</protein>
<reference key="1">
    <citation type="journal article" date="1996" name="Proc. Natl. Acad. Sci. U.S.A.">
        <title>Mutations in the small subunit of the Drosophila U2AF splicing factor cause lethality and developmental defects.</title>
        <authorList>
            <person name="Rudner D.Z."/>
            <person name="Kanaar R."/>
            <person name="Breger K.S."/>
            <person name="Rio D.C."/>
        </authorList>
    </citation>
    <scope>NUCLEOTIDE SEQUENCE [MRNA]</scope>
    <scope>PARTIAL PROTEIN SEQUENCE</scope>
    <source>
        <tissue>Embryo</tissue>
    </source>
</reference>
<reference key="2">
    <citation type="journal article" date="2000" name="Science">
        <title>The genome sequence of Drosophila melanogaster.</title>
        <authorList>
            <person name="Adams M.D."/>
            <person name="Celniker S.E."/>
            <person name="Holt R.A."/>
            <person name="Evans C.A."/>
            <person name="Gocayne J.D."/>
            <person name="Amanatides P.G."/>
            <person name="Scherer S.E."/>
            <person name="Li P.W."/>
            <person name="Hoskins R.A."/>
            <person name="Galle R.F."/>
            <person name="George R.A."/>
            <person name="Lewis S.E."/>
            <person name="Richards S."/>
            <person name="Ashburner M."/>
            <person name="Henderson S.N."/>
            <person name="Sutton G.G."/>
            <person name="Wortman J.R."/>
            <person name="Yandell M.D."/>
            <person name="Zhang Q."/>
            <person name="Chen L.X."/>
            <person name="Brandon R.C."/>
            <person name="Rogers Y.-H.C."/>
            <person name="Blazej R.G."/>
            <person name="Champe M."/>
            <person name="Pfeiffer B.D."/>
            <person name="Wan K.H."/>
            <person name="Doyle C."/>
            <person name="Baxter E.G."/>
            <person name="Helt G."/>
            <person name="Nelson C.R."/>
            <person name="Miklos G.L.G."/>
            <person name="Abril J.F."/>
            <person name="Agbayani A."/>
            <person name="An H.-J."/>
            <person name="Andrews-Pfannkoch C."/>
            <person name="Baldwin D."/>
            <person name="Ballew R.M."/>
            <person name="Basu A."/>
            <person name="Baxendale J."/>
            <person name="Bayraktaroglu L."/>
            <person name="Beasley E.M."/>
            <person name="Beeson K.Y."/>
            <person name="Benos P.V."/>
            <person name="Berman B.P."/>
            <person name="Bhandari D."/>
            <person name="Bolshakov S."/>
            <person name="Borkova D."/>
            <person name="Botchan M.R."/>
            <person name="Bouck J."/>
            <person name="Brokstein P."/>
            <person name="Brottier P."/>
            <person name="Burtis K.C."/>
            <person name="Busam D.A."/>
            <person name="Butler H."/>
            <person name="Cadieu E."/>
            <person name="Center A."/>
            <person name="Chandra I."/>
            <person name="Cherry J.M."/>
            <person name="Cawley S."/>
            <person name="Dahlke C."/>
            <person name="Davenport L.B."/>
            <person name="Davies P."/>
            <person name="de Pablos B."/>
            <person name="Delcher A."/>
            <person name="Deng Z."/>
            <person name="Mays A.D."/>
            <person name="Dew I."/>
            <person name="Dietz S.M."/>
            <person name="Dodson K."/>
            <person name="Doup L.E."/>
            <person name="Downes M."/>
            <person name="Dugan-Rocha S."/>
            <person name="Dunkov B.C."/>
            <person name="Dunn P."/>
            <person name="Durbin K.J."/>
            <person name="Evangelista C.C."/>
            <person name="Ferraz C."/>
            <person name="Ferriera S."/>
            <person name="Fleischmann W."/>
            <person name="Fosler C."/>
            <person name="Gabrielian A.E."/>
            <person name="Garg N.S."/>
            <person name="Gelbart W.M."/>
            <person name="Glasser K."/>
            <person name="Glodek A."/>
            <person name="Gong F."/>
            <person name="Gorrell J.H."/>
            <person name="Gu Z."/>
            <person name="Guan P."/>
            <person name="Harris M."/>
            <person name="Harris N.L."/>
            <person name="Harvey D.A."/>
            <person name="Heiman T.J."/>
            <person name="Hernandez J.R."/>
            <person name="Houck J."/>
            <person name="Hostin D."/>
            <person name="Houston K.A."/>
            <person name="Howland T.J."/>
            <person name="Wei M.-H."/>
            <person name="Ibegwam C."/>
            <person name="Jalali M."/>
            <person name="Kalush F."/>
            <person name="Karpen G.H."/>
            <person name="Ke Z."/>
            <person name="Kennison J.A."/>
            <person name="Ketchum K.A."/>
            <person name="Kimmel B.E."/>
            <person name="Kodira C.D."/>
            <person name="Kraft C.L."/>
            <person name="Kravitz S."/>
            <person name="Kulp D."/>
            <person name="Lai Z."/>
            <person name="Lasko P."/>
            <person name="Lei Y."/>
            <person name="Levitsky A.A."/>
            <person name="Li J.H."/>
            <person name="Li Z."/>
            <person name="Liang Y."/>
            <person name="Lin X."/>
            <person name="Liu X."/>
            <person name="Mattei B."/>
            <person name="McIntosh T.C."/>
            <person name="McLeod M.P."/>
            <person name="McPherson D."/>
            <person name="Merkulov G."/>
            <person name="Milshina N.V."/>
            <person name="Mobarry C."/>
            <person name="Morris J."/>
            <person name="Moshrefi A."/>
            <person name="Mount S.M."/>
            <person name="Moy M."/>
            <person name="Murphy B."/>
            <person name="Murphy L."/>
            <person name="Muzny D.M."/>
            <person name="Nelson D.L."/>
            <person name="Nelson D.R."/>
            <person name="Nelson K.A."/>
            <person name="Nixon K."/>
            <person name="Nusskern D.R."/>
            <person name="Pacleb J.M."/>
            <person name="Palazzolo M."/>
            <person name="Pittman G.S."/>
            <person name="Pan S."/>
            <person name="Pollard J."/>
            <person name="Puri V."/>
            <person name="Reese M.G."/>
            <person name="Reinert K."/>
            <person name="Remington K."/>
            <person name="Saunders R.D.C."/>
            <person name="Scheeler F."/>
            <person name="Shen H."/>
            <person name="Shue B.C."/>
            <person name="Siden-Kiamos I."/>
            <person name="Simpson M."/>
            <person name="Skupski M.P."/>
            <person name="Smith T.J."/>
            <person name="Spier E."/>
            <person name="Spradling A.C."/>
            <person name="Stapleton M."/>
            <person name="Strong R."/>
            <person name="Sun E."/>
            <person name="Svirskas R."/>
            <person name="Tector C."/>
            <person name="Turner R."/>
            <person name="Venter E."/>
            <person name="Wang A.H."/>
            <person name="Wang X."/>
            <person name="Wang Z.-Y."/>
            <person name="Wassarman D.A."/>
            <person name="Weinstock G.M."/>
            <person name="Weissenbach J."/>
            <person name="Williams S.M."/>
            <person name="Woodage T."/>
            <person name="Worley K.C."/>
            <person name="Wu D."/>
            <person name="Yang S."/>
            <person name="Yao Q.A."/>
            <person name="Ye J."/>
            <person name="Yeh R.-F."/>
            <person name="Zaveri J.S."/>
            <person name="Zhan M."/>
            <person name="Zhang G."/>
            <person name="Zhao Q."/>
            <person name="Zheng L."/>
            <person name="Zheng X.H."/>
            <person name="Zhong F.N."/>
            <person name="Zhong W."/>
            <person name="Zhou X."/>
            <person name="Zhu S.C."/>
            <person name="Zhu X."/>
            <person name="Smith H.O."/>
            <person name="Gibbs R.A."/>
            <person name="Myers E.W."/>
            <person name="Rubin G.M."/>
            <person name="Venter J.C."/>
        </authorList>
    </citation>
    <scope>NUCLEOTIDE SEQUENCE [LARGE SCALE GENOMIC DNA]</scope>
    <source>
        <strain>Berkeley</strain>
    </source>
</reference>
<reference key="3">
    <citation type="journal article" date="2002" name="Genome Biol.">
        <title>Annotation of the Drosophila melanogaster euchromatic genome: a systematic review.</title>
        <authorList>
            <person name="Misra S."/>
            <person name="Crosby M.A."/>
            <person name="Mungall C.J."/>
            <person name="Matthews B.B."/>
            <person name="Campbell K.S."/>
            <person name="Hradecky P."/>
            <person name="Huang Y."/>
            <person name="Kaminker J.S."/>
            <person name="Millburn G.H."/>
            <person name="Prochnik S.E."/>
            <person name="Smith C.D."/>
            <person name="Tupy J.L."/>
            <person name="Whitfield E.J."/>
            <person name="Bayraktaroglu L."/>
            <person name="Berman B.P."/>
            <person name="Bettencourt B.R."/>
            <person name="Celniker S.E."/>
            <person name="de Grey A.D.N.J."/>
            <person name="Drysdale R.A."/>
            <person name="Harris N.L."/>
            <person name="Richter J."/>
            <person name="Russo S."/>
            <person name="Schroeder A.J."/>
            <person name="Shu S.Q."/>
            <person name="Stapleton M."/>
            <person name="Yamada C."/>
            <person name="Ashburner M."/>
            <person name="Gelbart W.M."/>
            <person name="Rubin G.M."/>
            <person name="Lewis S.E."/>
        </authorList>
    </citation>
    <scope>GENOME REANNOTATION</scope>
    <source>
        <strain>Berkeley</strain>
    </source>
</reference>
<reference key="4">
    <citation type="journal article" date="2002" name="Genome Biol.">
        <title>A Drosophila full-length cDNA resource.</title>
        <authorList>
            <person name="Stapleton M."/>
            <person name="Carlson J.W."/>
            <person name="Brokstein P."/>
            <person name="Yu C."/>
            <person name="Champe M."/>
            <person name="George R.A."/>
            <person name="Guarin H."/>
            <person name="Kronmiller B."/>
            <person name="Pacleb J.M."/>
            <person name="Park S."/>
            <person name="Wan K.H."/>
            <person name="Rubin G.M."/>
            <person name="Celniker S.E."/>
        </authorList>
    </citation>
    <scope>NUCLEOTIDE SEQUENCE [LARGE SCALE MRNA]</scope>
    <source>
        <strain>Berkeley</strain>
        <tissue>Embryo</tissue>
    </source>
</reference>
<reference key="5">
    <citation type="journal article" date="2008" name="J. Proteome Res.">
        <title>Phosphoproteome analysis of Drosophila melanogaster embryos.</title>
        <authorList>
            <person name="Zhai B."/>
            <person name="Villen J."/>
            <person name="Beausoleil S.A."/>
            <person name="Mintseris J."/>
            <person name="Gygi S.P."/>
        </authorList>
    </citation>
    <scope>PHOSPHORYLATION [LARGE SCALE ANALYSIS] AT SER-19</scope>
    <scope>IDENTIFICATION BY MASS SPECTROMETRY</scope>
    <source>
        <tissue>Embryo</tissue>
    </source>
</reference>
<accession>Q94535</accession>
<accession>Q9VPN4</accession>
<keyword id="KW-0903">Direct protein sequencing</keyword>
<keyword id="KW-0479">Metal-binding</keyword>
<keyword id="KW-0507">mRNA processing</keyword>
<keyword id="KW-0508">mRNA splicing</keyword>
<keyword id="KW-0539">Nucleus</keyword>
<keyword id="KW-0597">Phosphoprotein</keyword>
<keyword id="KW-1185">Reference proteome</keyword>
<keyword id="KW-0677">Repeat</keyword>
<keyword id="KW-0694">RNA-binding</keyword>
<keyword id="KW-0862">Zinc</keyword>
<keyword id="KW-0863">Zinc-finger</keyword>
<organism>
    <name type="scientific">Drosophila melanogaster</name>
    <name type="common">Fruit fly</name>
    <dbReference type="NCBI Taxonomy" id="7227"/>
    <lineage>
        <taxon>Eukaryota</taxon>
        <taxon>Metazoa</taxon>
        <taxon>Ecdysozoa</taxon>
        <taxon>Arthropoda</taxon>
        <taxon>Hexapoda</taxon>
        <taxon>Insecta</taxon>
        <taxon>Pterygota</taxon>
        <taxon>Neoptera</taxon>
        <taxon>Endopterygota</taxon>
        <taxon>Diptera</taxon>
        <taxon>Brachycera</taxon>
        <taxon>Muscomorpha</taxon>
        <taxon>Ephydroidea</taxon>
        <taxon>Drosophilidae</taxon>
        <taxon>Drosophila</taxon>
        <taxon>Sophophora</taxon>
    </lineage>
</organism>